<accession>A0A1L9UQW4</accession>
<dbReference type="EMBL" id="KV878681">
    <property type="protein sequence ID" value="OJJ74128.1"/>
    <property type="molecule type" value="Genomic_DNA"/>
</dbReference>
<dbReference type="SMR" id="A0A1L9UQW4"/>
<dbReference type="VEuPathDB" id="FungiDB:ASPBRDRAFT_39216"/>
<dbReference type="OMA" id="LMETIAC"/>
<dbReference type="OrthoDB" id="10021397at2759"/>
<dbReference type="Proteomes" id="UP000184499">
    <property type="component" value="Unassembled WGS sequence"/>
</dbReference>
<dbReference type="GO" id="GO:0005886">
    <property type="term" value="C:plasma membrane"/>
    <property type="evidence" value="ECO:0007669"/>
    <property type="project" value="UniProtKB-SubCell"/>
</dbReference>
<dbReference type="GO" id="GO:0022857">
    <property type="term" value="F:transmembrane transporter activity"/>
    <property type="evidence" value="ECO:0007669"/>
    <property type="project" value="InterPro"/>
</dbReference>
<dbReference type="CDD" id="cd17502">
    <property type="entry name" value="MFS_Azr1_MDR_like"/>
    <property type="match status" value="1"/>
</dbReference>
<dbReference type="FunFam" id="1.20.1250.20:FF:000196">
    <property type="entry name" value="MFS toxin efflux pump (AflT)"/>
    <property type="match status" value="1"/>
</dbReference>
<dbReference type="FunFam" id="1.20.1720.10:FF:000012">
    <property type="entry name" value="MFS toxin efflux pump (AflT)"/>
    <property type="match status" value="1"/>
</dbReference>
<dbReference type="Gene3D" id="1.20.1250.20">
    <property type="entry name" value="MFS general substrate transporter like domains"/>
    <property type="match status" value="1"/>
</dbReference>
<dbReference type="Gene3D" id="1.20.1720.10">
    <property type="entry name" value="Multidrug resistance protein D"/>
    <property type="match status" value="1"/>
</dbReference>
<dbReference type="InterPro" id="IPR011701">
    <property type="entry name" value="MFS"/>
</dbReference>
<dbReference type="InterPro" id="IPR020846">
    <property type="entry name" value="MFS_dom"/>
</dbReference>
<dbReference type="InterPro" id="IPR036259">
    <property type="entry name" value="MFS_trans_sf"/>
</dbReference>
<dbReference type="InterPro" id="IPR005829">
    <property type="entry name" value="Sugar_transporter_CS"/>
</dbReference>
<dbReference type="PANTHER" id="PTHR23501">
    <property type="entry name" value="MAJOR FACILITATOR SUPERFAMILY"/>
    <property type="match status" value="1"/>
</dbReference>
<dbReference type="PANTHER" id="PTHR23501:SF199">
    <property type="entry name" value="MFS EFFLUX TRANSPORTER INPD-RELATED"/>
    <property type="match status" value="1"/>
</dbReference>
<dbReference type="Pfam" id="PF07690">
    <property type="entry name" value="MFS_1"/>
    <property type="match status" value="1"/>
</dbReference>
<dbReference type="SUPFAM" id="SSF103473">
    <property type="entry name" value="MFS general substrate transporter"/>
    <property type="match status" value="1"/>
</dbReference>
<dbReference type="PROSITE" id="PS50850">
    <property type="entry name" value="MFS"/>
    <property type="match status" value="1"/>
</dbReference>
<dbReference type="PROSITE" id="PS00217">
    <property type="entry name" value="SUGAR_TRANSPORT_2"/>
    <property type="match status" value="1"/>
</dbReference>
<keyword id="KW-1003">Cell membrane</keyword>
<keyword id="KW-0472">Membrane</keyword>
<keyword id="KW-1185">Reference proteome</keyword>
<keyword id="KW-0812">Transmembrane</keyword>
<keyword id="KW-1133">Transmembrane helix</keyword>
<name>BFOC_ASPBC</name>
<gene>
    <name evidence="3" type="primary">bfoC</name>
    <name type="ORF">ASPBRDRAFT_39216</name>
</gene>
<proteinExistence type="inferred from homology"/>
<sequence>MSDTARILGGPSASSSRDGGMELNSFTEVSQTNSRSHSTKEEEGQVDDQQRPAREEETGVLGGYKLVLVTIGLCFCIFCTSLDNTIVATAVPRITQQFHSLDDVGWYASAYLLTTCAVTLTFGRLYTFFPIKWVYLSALLIFELGSFICGITPSSLGLILGRAVAGLGGGGLLSGSLLIISQCVPSARRPAFSGFIMSIFAVASVIAPLMGGAFTDHVSWRWCFYINLPFGLVSAVVILFTFQHTKPVIQASLREKAVGLDPLGTATFLPGIVCLLLATQWGGAQYPWGDGRVVALFVLFGVLLVCFIGLQLWARERATVPPRLLRGRNIWGSALYGFCLNGAMFTFVYYLPIWFQAVQGASATESGIRNLPLVISNVVFAIISGVLVSMTGYLGPFMLLSAAMASISAGLLSTLQPSSGAGEWIGYQVLLGLSIGVGFQVPIFVVQTTLASTDIPTATALMTFIQLLGGAIFVSVAQNMFRNQLATDIRTVLPMLDPTAVINAGPTSLRGMYSGETLTTLVALYNDAVVHTFYLAIGLAAASFLAATVIQWRPLAKAVGE</sequence>
<evidence type="ECO:0000255" key="1"/>
<evidence type="ECO:0000256" key="2">
    <source>
        <dbReference type="SAM" id="MobiDB-lite"/>
    </source>
</evidence>
<evidence type="ECO:0000303" key="3">
    <source>
    </source>
</evidence>
<evidence type="ECO:0000305" key="4"/>
<evidence type="ECO:0000305" key="5">
    <source>
    </source>
</evidence>
<comment type="function">
    <text evidence="5">Efflux pump; part of the gene cluster that mediates the biosynthesis of bifonsecin B, a dimeric gamma-naphthopyrone.</text>
</comment>
<comment type="subcellular location">
    <subcellularLocation>
        <location evidence="4">Cell membrane</location>
        <topology evidence="1">Multi-pass membrane protein</topology>
    </subcellularLocation>
</comment>
<comment type="similarity">
    <text evidence="4">Belongs to the major facilitator superfamily. TCR/Tet family.</text>
</comment>
<protein>
    <recommendedName>
        <fullName evidence="3">Efflux pump bfoC</fullName>
    </recommendedName>
    <alternativeName>
        <fullName evidence="3">Bifonsecin B biosynthesis cluster protein C</fullName>
    </alternativeName>
</protein>
<reference key="1">
    <citation type="journal article" date="2017" name="Genome Biol.">
        <title>Comparative genomics reveals high biological diversity and specific adaptations in the industrially and medically important fungal genus Aspergillus.</title>
        <authorList>
            <person name="de Vries R.P."/>
            <person name="Riley R."/>
            <person name="Wiebenga A."/>
            <person name="Aguilar-Osorio G."/>
            <person name="Amillis S."/>
            <person name="Uchima C.A."/>
            <person name="Anderluh G."/>
            <person name="Asadollahi M."/>
            <person name="Askin M."/>
            <person name="Barry K."/>
            <person name="Battaglia E."/>
            <person name="Bayram O."/>
            <person name="Benocci T."/>
            <person name="Braus-Stromeyer S.A."/>
            <person name="Caldana C."/>
            <person name="Canovas D."/>
            <person name="Cerqueira G.C."/>
            <person name="Chen F."/>
            <person name="Chen W."/>
            <person name="Choi C."/>
            <person name="Clum A."/>
            <person name="Dos Santos R.A."/>
            <person name="Damasio A.R."/>
            <person name="Diallinas G."/>
            <person name="Emri T."/>
            <person name="Fekete E."/>
            <person name="Flipphi M."/>
            <person name="Freyberg S."/>
            <person name="Gallo A."/>
            <person name="Gournas C."/>
            <person name="Habgood R."/>
            <person name="Hainaut M."/>
            <person name="Harispe M.L."/>
            <person name="Henrissat B."/>
            <person name="Hilden K.S."/>
            <person name="Hope R."/>
            <person name="Hossain A."/>
            <person name="Karabika E."/>
            <person name="Karaffa L."/>
            <person name="Karanyi Z."/>
            <person name="Krasevec N."/>
            <person name="Kuo A."/>
            <person name="Kusch H."/>
            <person name="LaButti K."/>
            <person name="Lagendijk E.L."/>
            <person name="Lapidus A."/>
            <person name="Levasseur A."/>
            <person name="Lindquist E."/>
            <person name="Lipzen A."/>
            <person name="Logrieco A.F."/>
            <person name="MacCabe A."/>
            <person name="Maekelae M.R."/>
            <person name="Malavazi I."/>
            <person name="Melin P."/>
            <person name="Meyer V."/>
            <person name="Mielnichuk N."/>
            <person name="Miskei M."/>
            <person name="Molnar A.P."/>
            <person name="Mule G."/>
            <person name="Ngan C.Y."/>
            <person name="Orejas M."/>
            <person name="Orosz E."/>
            <person name="Ouedraogo J.P."/>
            <person name="Overkamp K.M."/>
            <person name="Park H.-S."/>
            <person name="Perrone G."/>
            <person name="Piumi F."/>
            <person name="Punt P.J."/>
            <person name="Ram A.F."/>
            <person name="Ramon A."/>
            <person name="Rauscher S."/>
            <person name="Record E."/>
            <person name="Riano-Pachon D.M."/>
            <person name="Robert V."/>
            <person name="Roehrig J."/>
            <person name="Ruller R."/>
            <person name="Salamov A."/>
            <person name="Salih N.S."/>
            <person name="Samson R.A."/>
            <person name="Sandor E."/>
            <person name="Sanguinetti M."/>
            <person name="Schuetze T."/>
            <person name="Sepcic K."/>
            <person name="Shelest E."/>
            <person name="Sherlock G."/>
            <person name="Sophianopoulou V."/>
            <person name="Squina F.M."/>
            <person name="Sun H."/>
            <person name="Susca A."/>
            <person name="Todd R.B."/>
            <person name="Tsang A."/>
            <person name="Unkles S.E."/>
            <person name="van de Wiele N."/>
            <person name="van Rossen-Uffink D."/>
            <person name="Oliveira J.V."/>
            <person name="Vesth T.C."/>
            <person name="Visser J."/>
            <person name="Yu J.-H."/>
            <person name="Zhou M."/>
            <person name="Andersen M.R."/>
            <person name="Archer D.B."/>
            <person name="Baker S.E."/>
            <person name="Benoit I."/>
            <person name="Brakhage A.A."/>
            <person name="Braus G.H."/>
            <person name="Fischer R."/>
            <person name="Frisvad J.C."/>
            <person name="Goldman G.H."/>
            <person name="Houbraken J."/>
            <person name="Oakley B."/>
            <person name="Pocsi I."/>
            <person name="Scazzocchio C."/>
            <person name="Seiboth B."/>
            <person name="vanKuyk P.A."/>
            <person name="Wortman J."/>
            <person name="Dyer P.S."/>
            <person name="Grigoriev I.V."/>
        </authorList>
    </citation>
    <scope>NUCLEOTIDE SEQUENCE [LARGE SCALE GENOMIC DNA]</scope>
    <source>
        <strain>CBS 101740 / IMI 381727 / IBT 21946</strain>
    </source>
</reference>
<reference key="2">
    <citation type="journal article" date="2019" name="Biochemistry">
        <title>Biaryl-forming enzymes from Aspergilli exhibit substrate-dependent stereoselectivity.</title>
        <authorList>
            <person name="Obermaier S."/>
            <person name="Mueller M."/>
        </authorList>
    </citation>
    <scope>FUNCTION</scope>
</reference>
<feature type="chain" id="PRO_0000448929" description="Efflux pump bfoC">
    <location>
        <begin position="1"/>
        <end position="561"/>
    </location>
</feature>
<feature type="transmembrane region" description="Helical" evidence="1">
    <location>
        <begin position="59"/>
        <end position="79"/>
    </location>
</feature>
<feature type="transmembrane region" description="Helical" evidence="1">
    <location>
        <begin position="103"/>
        <end position="123"/>
    </location>
</feature>
<feature type="transmembrane region" description="Helical" evidence="1">
    <location>
        <begin position="128"/>
        <end position="148"/>
    </location>
</feature>
<feature type="transmembrane region" description="Helical" evidence="1">
    <location>
        <begin position="164"/>
        <end position="184"/>
    </location>
</feature>
<feature type="transmembrane region" description="Helical" evidence="1">
    <location>
        <begin position="194"/>
        <end position="214"/>
    </location>
</feature>
<feature type="transmembrane region" description="Helical" evidence="1">
    <location>
        <begin position="222"/>
        <end position="242"/>
    </location>
</feature>
<feature type="transmembrane region" description="Helical" evidence="1">
    <location>
        <begin position="257"/>
        <end position="277"/>
    </location>
</feature>
<feature type="transmembrane region" description="Helical" evidence="1">
    <location>
        <begin position="293"/>
        <end position="313"/>
    </location>
</feature>
<feature type="transmembrane region" description="Helical" evidence="1">
    <location>
        <begin position="335"/>
        <end position="355"/>
    </location>
</feature>
<feature type="transmembrane region" description="Helical" evidence="1">
    <location>
        <begin position="378"/>
        <end position="398"/>
    </location>
</feature>
<feature type="transmembrane region" description="Helical" evidence="1">
    <location>
        <begin position="425"/>
        <end position="445"/>
    </location>
</feature>
<feature type="transmembrane region" description="Helical" evidence="1">
    <location>
        <begin position="457"/>
        <end position="477"/>
    </location>
</feature>
<feature type="transmembrane region" description="Helical" evidence="1">
    <location>
        <begin position="530"/>
        <end position="550"/>
    </location>
</feature>
<feature type="region of interest" description="Disordered" evidence="2">
    <location>
        <begin position="1"/>
        <end position="55"/>
    </location>
</feature>
<feature type="compositionally biased region" description="Polar residues" evidence="2">
    <location>
        <begin position="24"/>
        <end position="36"/>
    </location>
</feature>
<feature type="compositionally biased region" description="Basic and acidic residues" evidence="2">
    <location>
        <begin position="38"/>
        <end position="55"/>
    </location>
</feature>
<organism>
    <name type="scientific">Aspergillus brasiliensis (strain CBS 101740 / IMI 381727 / IBT 21946)</name>
    <dbReference type="NCBI Taxonomy" id="767769"/>
    <lineage>
        <taxon>Eukaryota</taxon>
        <taxon>Fungi</taxon>
        <taxon>Dikarya</taxon>
        <taxon>Ascomycota</taxon>
        <taxon>Pezizomycotina</taxon>
        <taxon>Eurotiomycetes</taxon>
        <taxon>Eurotiomycetidae</taxon>
        <taxon>Eurotiales</taxon>
        <taxon>Aspergillaceae</taxon>
        <taxon>Aspergillus</taxon>
        <taxon>Aspergillus subgen. Circumdati</taxon>
    </lineage>
</organism>